<feature type="chain" id="PRO_0000278264" description="Rab effector Noc2">
    <location>
        <begin position="1"/>
        <end position="302"/>
    </location>
</feature>
<feature type="domain" description="RabBD" evidence="3">
    <location>
        <begin position="41"/>
        <end position="158"/>
    </location>
</feature>
<feature type="zinc finger region" description="FYVE-type" evidence="2">
    <location>
        <begin position="89"/>
        <end position="146"/>
    </location>
</feature>
<feature type="region of interest" description="Disordered" evidence="4">
    <location>
        <begin position="174"/>
        <end position="302"/>
    </location>
</feature>
<feature type="compositionally biased region" description="Polar residues" evidence="4">
    <location>
        <begin position="185"/>
        <end position="197"/>
    </location>
</feature>
<feature type="compositionally biased region" description="Low complexity" evidence="4">
    <location>
        <begin position="258"/>
        <end position="269"/>
    </location>
</feature>
<feature type="binding site" evidence="2">
    <location>
        <position position="95"/>
    </location>
    <ligand>
        <name>Zn(2+)</name>
        <dbReference type="ChEBI" id="CHEBI:29105"/>
        <label>1</label>
    </ligand>
</feature>
<feature type="binding site" evidence="2">
    <location>
        <position position="98"/>
    </location>
    <ligand>
        <name>Zn(2+)</name>
        <dbReference type="ChEBI" id="CHEBI:29105"/>
        <label>1</label>
    </ligand>
</feature>
<feature type="binding site" evidence="2">
    <location>
        <position position="112"/>
    </location>
    <ligand>
        <name>Zn(2+)</name>
        <dbReference type="ChEBI" id="CHEBI:29105"/>
        <label>2</label>
    </ligand>
</feature>
<feature type="binding site" evidence="2">
    <location>
        <position position="115"/>
    </location>
    <ligand>
        <name>Zn(2+)</name>
        <dbReference type="ChEBI" id="CHEBI:29105"/>
        <label>2</label>
    </ligand>
</feature>
<feature type="binding site" evidence="2">
    <location>
        <position position="120"/>
    </location>
    <ligand>
        <name>Zn(2+)</name>
        <dbReference type="ChEBI" id="CHEBI:29105"/>
        <label>1</label>
    </ligand>
</feature>
<feature type="binding site" evidence="2">
    <location>
        <position position="123"/>
    </location>
    <ligand>
        <name>Zn(2+)</name>
        <dbReference type="ChEBI" id="CHEBI:29105"/>
        <label>1</label>
    </ligand>
</feature>
<feature type="binding site" evidence="2">
    <location>
        <position position="138"/>
    </location>
    <ligand>
        <name>Zn(2+)</name>
        <dbReference type="ChEBI" id="CHEBI:29105"/>
        <label>2</label>
    </ligand>
</feature>
<feature type="binding site" evidence="2">
    <location>
        <position position="141"/>
    </location>
    <ligand>
        <name>Zn(2+)</name>
        <dbReference type="ChEBI" id="CHEBI:29105"/>
        <label>2</label>
    </ligand>
</feature>
<feature type="modified residue" description="Phosphoserine" evidence="9">
    <location>
        <position position="248"/>
    </location>
</feature>
<feature type="splice variant" id="VSP_023245" description="In isoform 2." evidence="8">
    <original>KVCTKCGIEASPGQKRPLWLCKIC</original>
    <variation>LGIRWLQHFLESLLILNRDLTCSL</variation>
    <location>
        <begin position="118"/>
        <end position="141"/>
    </location>
</feature>
<feature type="splice variant" id="VSP_023246" description="In isoform 2." evidence="8">
    <location>
        <begin position="142"/>
        <end position="302"/>
    </location>
</feature>
<feature type="mutagenesis site" description="Loss of binding to RAB27A, remaining cytoplasmic." evidence="5">
    <original>ELEII</original>
    <variation>ALEIA</variation>
    <location>
        <begin position="51"/>
        <end position="55"/>
    </location>
</feature>
<comment type="function">
    <text evidence="5 6">Rab GTPase effector involved in the late steps of regulated exocytosis, both in endocrine and exocrine cells. Regulates the exocytosis of dense-core vesicles in neuroendocrine cells through interaction with RAB27A. Acts as a potential RAB3B effector protein in epithelial cells.</text>
</comment>
<comment type="subunit">
    <text evidence="1">Recruited to dense-core vesicles through specific interaction with RAB27A in endocrine cells. Interacts with RAB3A, RAB3B, RAB3C and RAB3D. Interacts with ZYX (By similarity).</text>
</comment>
<comment type="subcellular location">
    <subcellularLocation>
        <location>Cytoplasm</location>
    </subcellularLocation>
    <subcellularLocation>
        <location>Cytoplasmic vesicle</location>
        <location>Secretory vesicle membrane</location>
    </subcellularLocation>
    <text>Recruited to the exocytic secretory vesicles by RAB27A.</text>
</comment>
<comment type="alternative products">
    <event type="alternative splicing"/>
    <isoform>
        <id>Q768S4-1</id>
        <name>1</name>
        <sequence type="displayed"/>
    </isoform>
    <isoform>
        <id>Q768S4-2</id>
        <name>2</name>
        <sequence type="described" ref="VSP_023245 VSP_023246"/>
    </isoform>
</comment>
<comment type="tissue specificity">
    <text evidence="7">Highly expressed in pancreatic islets. High to moderate expression in adrenal gland, pituitary gland and ovary.</text>
</comment>
<comment type="domain">
    <text evidence="5">The N-terminus of the RabBD domain is necessary and sufficient for interaction with RAB27A.</text>
</comment>
<dbReference type="EMBL" id="AB112925">
    <property type="protein sequence ID" value="BAD07030.1"/>
    <property type="molecule type" value="mRNA"/>
</dbReference>
<dbReference type="EMBL" id="AB158403">
    <property type="protein sequence ID" value="BAD18853.1"/>
    <property type="molecule type" value="mRNA"/>
</dbReference>
<dbReference type="EMBL" id="AK018335">
    <property type="protein sequence ID" value="BAB31169.1"/>
    <property type="molecule type" value="mRNA"/>
</dbReference>
<dbReference type="EMBL" id="AL731710">
    <property type="protein sequence ID" value="CAI24681.1"/>
    <property type="molecule type" value="Genomic_DNA"/>
</dbReference>
<dbReference type="EMBL" id="AL731710">
    <property type="protein sequence ID" value="CAI24682.1"/>
    <property type="molecule type" value="Genomic_DNA"/>
</dbReference>
<dbReference type="EMBL" id="AL669897">
    <property type="protein sequence ID" value="CAI24682.1"/>
    <property type="status" value="JOINED"/>
    <property type="molecule type" value="Genomic_DNA"/>
</dbReference>
<dbReference type="EMBL" id="BC127960">
    <property type="protein sequence ID" value="AAI27961.1"/>
    <property type="molecule type" value="mRNA"/>
</dbReference>
<dbReference type="CCDS" id="CCDS25058.1">
    <molecule id="Q768S4-1"/>
</dbReference>
<dbReference type="CCDS" id="CCDS70243.1">
    <molecule id="Q768S4-2"/>
</dbReference>
<dbReference type="RefSeq" id="NP_001278088.1">
    <molecule id="Q768S4-2"/>
    <property type="nucleotide sequence ID" value="NM_001291159.1"/>
</dbReference>
<dbReference type="RefSeq" id="NP_083824.1">
    <molecule id="Q768S4-1"/>
    <property type="nucleotide sequence ID" value="NM_029548.4"/>
</dbReference>
<dbReference type="RefSeq" id="XP_006533700.1">
    <molecule id="Q768S4-1"/>
    <property type="nucleotide sequence ID" value="XM_006533637.2"/>
</dbReference>
<dbReference type="RefSeq" id="XP_006533701.1">
    <molecule id="Q768S4-1"/>
    <property type="nucleotide sequence ID" value="XM_006533638.5"/>
</dbReference>
<dbReference type="RefSeq" id="XP_006533702.1">
    <molecule id="Q768S4-1"/>
    <property type="nucleotide sequence ID" value="XM_006533639.4"/>
</dbReference>
<dbReference type="RefSeq" id="XP_006533703.1">
    <molecule id="Q768S4-1"/>
    <property type="nucleotide sequence ID" value="XM_006533640.5"/>
</dbReference>
<dbReference type="RefSeq" id="XP_006533704.1">
    <molecule id="Q768S4-1"/>
    <property type="nucleotide sequence ID" value="XM_006533641.5"/>
</dbReference>
<dbReference type="RefSeq" id="XP_006533705.1">
    <molecule id="Q768S4-1"/>
    <property type="nucleotide sequence ID" value="XM_006533642.5"/>
</dbReference>
<dbReference type="RefSeq" id="XP_011247403.1">
    <molecule id="Q768S4-2"/>
    <property type="nucleotide sequence ID" value="XM_011249101.2"/>
</dbReference>
<dbReference type="RefSeq" id="XP_011247404.1">
    <molecule id="Q768S4-2"/>
    <property type="nucleotide sequence ID" value="XM_011249102.2"/>
</dbReference>
<dbReference type="SMR" id="Q768S4"/>
<dbReference type="BioGRID" id="237613">
    <property type="interactions" value="10"/>
</dbReference>
<dbReference type="FunCoup" id="Q768S4">
    <property type="interactions" value="122"/>
</dbReference>
<dbReference type="IntAct" id="Q768S4">
    <property type="interactions" value="1"/>
</dbReference>
<dbReference type="STRING" id="10090.ENSMUSP00000113869"/>
<dbReference type="GlyGen" id="Q768S4">
    <property type="glycosylation" value="1 site"/>
</dbReference>
<dbReference type="iPTMnet" id="Q768S4"/>
<dbReference type="PhosphoSitePlus" id="Q768S4"/>
<dbReference type="PaxDb" id="10090-ENSMUSP00000113869"/>
<dbReference type="ProteomicsDB" id="300442">
    <molecule id="Q768S4-1"/>
</dbReference>
<dbReference type="ProteomicsDB" id="300443">
    <molecule id="Q768S4-2"/>
</dbReference>
<dbReference type="Antibodypedia" id="10243">
    <property type="antibodies" value="210 antibodies from 26 providers"/>
</dbReference>
<dbReference type="DNASU" id="380714"/>
<dbReference type="Ensembl" id="ENSMUST00000021208.11">
    <molecule id="Q768S4-2"/>
    <property type="protein sequence ID" value="ENSMUSP00000021208.5"/>
    <property type="gene ID" value="ENSMUSG00000020847.16"/>
</dbReference>
<dbReference type="Ensembl" id="ENSMUST00000066504.11">
    <molecule id="Q768S4-1"/>
    <property type="protein sequence ID" value="ENSMUSP00000064202.5"/>
    <property type="gene ID" value="ENSMUSG00000020847.16"/>
</dbReference>
<dbReference type="Ensembl" id="ENSMUST00000108420.9">
    <molecule id="Q768S4-2"/>
    <property type="protein sequence ID" value="ENSMUSP00000104058.3"/>
    <property type="gene ID" value="ENSMUSG00000020847.16"/>
</dbReference>
<dbReference type="Ensembl" id="ENSMUST00000121287.8">
    <molecule id="Q768S4-1"/>
    <property type="protein sequence ID" value="ENSMUSP00000113869.2"/>
    <property type="gene ID" value="ENSMUSG00000020847.16"/>
</dbReference>
<dbReference type="GeneID" id="380714"/>
<dbReference type="KEGG" id="mmu:380714"/>
<dbReference type="UCSC" id="uc007kew.2">
    <molecule id="Q768S4-1"/>
    <property type="organism name" value="mouse"/>
</dbReference>
<dbReference type="UCSC" id="uc007kex.2">
    <molecule id="Q768S4-2"/>
    <property type="organism name" value="mouse"/>
</dbReference>
<dbReference type="AGR" id="MGI:1923492"/>
<dbReference type="CTD" id="9501"/>
<dbReference type="MGI" id="MGI:1923492">
    <property type="gene designation" value="Rph3al"/>
</dbReference>
<dbReference type="VEuPathDB" id="HostDB:ENSMUSG00000020847"/>
<dbReference type="eggNOG" id="KOG1013">
    <property type="taxonomic scope" value="Eukaryota"/>
</dbReference>
<dbReference type="GeneTree" id="ENSGT00440000034248"/>
<dbReference type="HOGENOM" id="CLU_076502_1_0_1"/>
<dbReference type="InParanoid" id="Q768S4"/>
<dbReference type="OMA" id="AGKRHTW"/>
<dbReference type="OrthoDB" id="270970at2759"/>
<dbReference type="PhylomeDB" id="Q768S4"/>
<dbReference type="TreeFam" id="TF342971"/>
<dbReference type="BioGRID-ORCS" id="380714">
    <property type="hits" value="1 hit in 76 CRISPR screens"/>
</dbReference>
<dbReference type="ChiTaRS" id="Rph3al">
    <property type="organism name" value="mouse"/>
</dbReference>
<dbReference type="PRO" id="PR:Q768S4"/>
<dbReference type="Proteomes" id="UP000000589">
    <property type="component" value="Chromosome 11"/>
</dbReference>
<dbReference type="RNAct" id="Q768S4">
    <property type="molecule type" value="protein"/>
</dbReference>
<dbReference type="Bgee" id="ENSMUSG00000020847">
    <property type="expression patterns" value="Expressed in primary oocyte and 155 other cell types or tissues"/>
</dbReference>
<dbReference type="ExpressionAtlas" id="Q768S4">
    <property type="expression patterns" value="baseline and differential"/>
</dbReference>
<dbReference type="GO" id="GO:0030141">
    <property type="term" value="C:secretory granule"/>
    <property type="evidence" value="ECO:0007669"/>
    <property type="project" value="Ensembl"/>
</dbReference>
<dbReference type="GO" id="GO:0030658">
    <property type="term" value="C:transport vesicle membrane"/>
    <property type="evidence" value="ECO:0007669"/>
    <property type="project" value="UniProtKB-SubCell"/>
</dbReference>
<dbReference type="GO" id="GO:0030274">
    <property type="term" value="F:LIM domain binding"/>
    <property type="evidence" value="ECO:0007669"/>
    <property type="project" value="Ensembl"/>
</dbReference>
<dbReference type="GO" id="GO:0031267">
    <property type="term" value="F:small GTPase binding"/>
    <property type="evidence" value="ECO:0007669"/>
    <property type="project" value="InterPro"/>
</dbReference>
<dbReference type="GO" id="GO:0008270">
    <property type="term" value="F:zinc ion binding"/>
    <property type="evidence" value="ECO:0007669"/>
    <property type="project" value="UniProtKB-KW"/>
</dbReference>
<dbReference type="GO" id="GO:0006887">
    <property type="term" value="P:exocytosis"/>
    <property type="evidence" value="ECO:0007669"/>
    <property type="project" value="UniProtKB-KW"/>
</dbReference>
<dbReference type="GO" id="GO:0007186">
    <property type="term" value="P:G protein-coupled receptor signaling pathway"/>
    <property type="evidence" value="ECO:0000315"/>
    <property type="project" value="MGI"/>
</dbReference>
<dbReference type="GO" id="GO:0042593">
    <property type="term" value="P:glucose homeostasis"/>
    <property type="evidence" value="ECO:0000314"/>
    <property type="project" value="UniProtKB"/>
</dbReference>
<dbReference type="GO" id="GO:0006886">
    <property type="term" value="P:intracellular protein transport"/>
    <property type="evidence" value="ECO:0007669"/>
    <property type="project" value="InterPro"/>
</dbReference>
<dbReference type="GO" id="GO:0045744">
    <property type="term" value="P:negative regulation of G protein-coupled receptor signaling pathway"/>
    <property type="evidence" value="ECO:0000315"/>
    <property type="project" value="MGI"/>
</dbReference>
<dbReference type="GO" id="GO:0032024">
    <property type="term" value="P:positive regulation of insulin secretion"/>
    <property type="evidence" value="ECO:0000314"/>
    <property type="project" value="UniProtKB"/>
</dbReference>
<dbReference type="GO" id="GO:0017158">
    <property type="term" value="P:regulation of calcium ion-dependent exocytosis"/>
    <property type="evidence" value="ECO:0000315"/>
    <property type="project" value="MGI"/>
</dbReference>
<dbReference type="GO" id="GO:0009410">
    <property type="term" value="P:response to xenobiotic stimulus"/>
    <property type="evidence" value="ECO:0007669"/>
    <property type="project" value="Ensembl"/>
</dbReference>
<dbReference type="CDD" id="cd15763">
    <property type="entry name" value="FYVE_RPH3L"/>
    <property type="match status" value="1"/>
</dbReference>
<dbReference type="FunFam" id="3.30.40.10:FF:000347">
    <property type="entry name" value="rab effector Noc2 isoform X1"/>
    <property type="match status" value="1"/>
</dbReference>
<dbReference type="Gene3D" id="3.30.40.10">
    <property type="entry name" value="Zinc/RING finger domain, C3HC4 (zinc finger)"/>
    <property type="match status" value="1"/>
</dbReference>
<dbReference type="InterPro" id="IPR041282">
    <property type="entry name" value="FYVE_2"/>
</dbReference>
<dbReference type="InterPro" id="IPR041857">
    <property type="entry name" value="Noc2_FYVE"/>
</dbReference>
<dbReference type="InterPro" id="IPR010911">
    <property type="entry name" value="Rab_BD"/>
</dbReference>
<dbReference type="InterPro" id="IPR043566">
    <property type="entry name" value="Rabphilin/DOC2/Noc2"/>
</dbReference>
<dbReference type="InterPro" id="IPR017455">
    <property type="entry name" value="Znf_FYVE-rel"/>
</dbReference>
<dbReference type="InterPro" id="IPR011011">
    <property type="entry name" value="Znf_FYVE_PHD"/>
</dbReference>
<dbReference type="InterPro" id="IPR013083">
    <property type="entry name" value="Znf_RING/FYVE/PHD"/>
</dbReference>
<dbReference type="PANTHER" id="PTHR45729:SF4">
    <property type="entry name" value="RAB EFFECTOR NOC2"/>
    <property type="match status" value="1"/>
</dbReference>
<dbReference type="PANTHER" id="PTHR45729">
    <property type="entry name" value="RABPHILIN, ISOFORM A"/>
    <property type="match status" value="1"/>
</dbReference>
<dbReference type="Pfam" id="PF02318">
    <property type="entry name" value="FYVE_2"/>
    <property type="match status" value="1"/>
</dbReference>
<dbReference type="SUPFAM" id="SSF57903">
    <property type="entry name" value="FYVE/PHD zinc finger"/>
    <property type="match status" value="1"/>
</dbReference>
<dbReference type="PROSITE" id="PS50916">
    <property type="entry name" value="RABBD"/>
    <property type="match status" value="1"/>
</dbReference>
<dbReference type="PROSITE" id="PS50178">
    <property type="entry name" value="ZF_FYVE"/>
    <property type="match status" value="1"/>
</dbReference>
<protein>
    <recommendedName>
        <fullName>Rab effector Noc2</fullName>
    </recommendedName>
    <alternativeName>
        <fullName>No C2 domains protein</fullName>
    </alternativeName>
    <alternativeName>
        <fullName>Rabphilin-3A-like protein</fullName>
    </alternativeName>
</protein>
<proteinExistence type="evidence at protein level"/>
<keyword id="KW-0025">Alternative splicing</keyword>
<keyword id="KW-0963">Cytoplasm</keyword>
<keyword id="KW-0968">Cytoplasmic vesicle</keyword>
<keyword id="KW-0268">Exocytosis</keyword>
<keyword id="KW-0472">Membrane</keyword>
<keyword id="KW-0479">Metal-binding</keyword>
<keyword id="KW-0597">Phosphoprotein</keyword>
<keyword id="KW-1185">Reference proteome</keyword>
<keyword id="KW-0862">Zinc</keyword>
<keyword id="KW-0863">Zinc-finger</keyword>
<organism>
    <name type="scientific">Mus musculus</name>
    <name type="common">Mouse</name>
    <dbReference type="NCBI Taxonomy" id="10090"/>
    <lineage>
        <taxon>Eukaryota</taxon>
        <taxon>Metazoa</taxon>
        <taxon>Chordata</taxon>
        <taxon>Craniata</taxon>
        <taxon>Vertebrata</taxon>
        <taxon>Euteleostomi</taxon>
        <taxon>Mammalia</taxon>
        <taxon>Eutheria</taxon>
        <taxon>Euarchontoglires</taxon>
        <taxon>Glires</taxon>
        <taxon>Rodentia</taxon>
        <taxon>Myomorpha</taxon>
        <taxon>Muroidea</taxon>
        <taxon>Muridae</taxon>
        <taxon>Murinae</taxon>
        <taxon>Mus</taxon>
        <taxon>Mus</taxon>
    </lineage>
</organism>
<accession>Q768S4</accession>
<accession>Q9D353</accession>
<name>RPH3L_MOUSE</name>
<evidence type="ECO:0000250" key="1"/>
<evidence type="ECO:0000255" key="2">
    <source>
        <dbReference type="PROSITE-ProRule" id="PRU00091"/>
    </source>
</evidence>
<evidence type="ECO:0000255" key="3">
    <source>
        <dbReference type="PROSITE-ProRule" id="PRU00234"/>
    </source>
</evidence>
<evidence type="ECO:0000256" key="4">
    <source>
        <dbReference type="SAM" id="MobiDB-lite"/>
    </source>
</evidence>
<evidence type="ECO:0000269" key="5">
    <source>
    </source>
</evidence>
<evidence type="ECO:0000269" key="6">
    <source>
    </source>
</evidence>
<evidence type="ECO:0000269" key="7">
    <source>
    </source>
</evidence>
<evidence type="ECO:0000303" key="8">
    <source>
    </source>
</evidence>
<evidence type="ECO:0007744" key="9">
    <source>
    </source>
</evidence>
<sequence>MADTIFSSGNDQWVCPNDRQLALRAKLQTGWSVHTYQTEKQRRSQCLSPGELEIILQVIQRAERLDILEQQRIGRLVERLETMQRNVMGNGLSQCLLCGEVLGFLGSSSVFCKDCRKKVCTKCGIEASPGQKRPLWLCKICSEQREVWKRSGAWFYKGLPKYILPLKTPGRADDPHFRPLPVEPTETQPPSAETSRVYTWARGRVVSSDSDSDSDLSSSSLEDRPLPSGVKGTKGDKPRGDSGASMESPRLGPARPPSHLSGSQSSLGSEAGTGATEPQGGTPAQPEPRVPGKRHTWATPRY</sequence>
<gene>
    <name type="primary">Rph3al</name>
    <name type="synonym">Gm1753</name>
    <name type="synonym">Noc2</name>
</gene>
<reference key="1">
    <citation type="journal article" date="2004" name="J. Biol. Chem.">
        <title>Rabphilin and Noc2 are recruited to dense-core vesicles through specific interaction with Rab27A in PC12 cells.</title>
        <authorList>
            <person name="Fukuda M."/>
            <person name="Kanno E."/>
            <person name="Yamamoto A."/>
        </authorList>
    </citation>
    <scope>NUCLEOTIDE SEQUENCE [MRNA] (ISOFORM 1)</scope>
    <scope>FUNCTION</scope>
    <scope>SUBUNIT</scope>
    <scope>SUBCELLULAR LOCATION</scope>
    <scope>DOMAIN</scope>
    <scope>MUTAGENESIS OF 51-GLU--ILE-55</scope>
    <source>
        <tissue>Brain</tissue>
    </source>
</reference>
<reference key="2">
    <citation type="journal article" date="2004" name="Proc. Natl. Acad. Sci. U.S.A.">
        <title>Noc2 is essential in normal regulation of exocytosis in endocrine and exocrine cells.</title>
        <authorList>
            <person name="Matsumoto M."/>
            <person name="Miki T."/>
            <person name="Shibasaki T."/>
            <person name="Kawaguchi M."/>
            <person name="Shinozaki H."/>
            <person name="Nio J."/>
            <person name="Saraya A."/>
            <person name="Koseki H."/>
            <person name="Miyazaki M."/>
            <person name="Iwanaga T."/>
            <person name="Seino S."/>
        </authorList>
    </citation>
    <scope>NUCLEOTIDE SEQUENCE [MRNA] (ISOFORM 1)</scope>
    <scope>FUNCTION</scope>
    <scope>INTERACTION WITH RAB3A; RAB3B; RAB3C AND RAB3D</scope>
</reference>
<reference key="3">
    <citation type="journal article" date="2005" name="Science">
        <title>The transcriptional landscape of the mammalian genome.</title>
        <authorList>
            <person name="Carninci P."/>
            <person name="Kasukawa T."/>
            <person name="Katayama S."/>
            <person name="Gough J."/>
            <person name="Frith M.C."/>
            <person name="Maeda N."/>
            <person name="Oyama R."/>
            <person name="Ravasi T."/>
            <person name="Lenhard B."/>
            <person name="Wells C."/>
            <person name="Kodzius R."/>
            <person name="Shimokawa K."/>
            <person name="Bajic V.B."/>
            <person name="Brenner S.E."/>
            <person name="Batalov S."/>
            <person name="Forrest A.R."/>
            <person name="Zavolan M."/>
            <person name="Davis M.J."/>
            <person name="Wilming L.G."/>
            <person name="Aidinis V."/>
            <person name="Allen J.E."/>
            <person name="Ambesi-Impiombato A."/>
            <person name="Apweiler R."/>
            <person name="Aturaliya R.N."/>
            <person name="Bailey T.L."/>
            <person name="Bansal M."/>
            <person name="Baxter L."/>
            <person name="Beisel K.W."/>
            <person name="Bersano T."/>
            <person name="Bono H."/>
            <person name="Chalk A.M."/>
            <person name="Chiu K.P."/>
            <person name="Choudhary V."/>
            <person name="Christoffels A."/>
            <person name="Clutterbuck D.R."/>
            <person name="Crowe M.L."/>
            <person name="Dalla E."/>
            <person name="Dalrymple B.P."/>
            <person name="de Bono B."/>
            <person name="Della Gatta G."/>
            <person name="di Bernardo D."/>
            <person name="Down T."/>
            <person name="Engstrom P."/>
            <person name="Fagiolini M."/>
            <person name="Faulkner G."/>
            <person name="Fletcher C.F."/>
            <person name="Fukushima T."/>
            <person name="Furuno M."/>
            <person name="Futaki S."/>
            <person name="Gariboldi M."/>
            <person name="Georgii-Hemming P."/>
            <person name="Gingeras T.R."/>
            <person name="Gojobori T."/>
            <person name="Green R.E."/>
            <person name="Gustincich S."/>
            <person name="Harbers M."/>
            <person name="Hayashi Y."/>
            <person name="Hensch T.K."/>
            <person name="Hirokawa N."/>
            <person name="Hill D."/>
            <person name="Huminiecki L."/>
            <person name="Iacono M."/>
            <person name="Ikeo K."/>
            <person name="Iwama A."/>
            <person name="Ishikawa T."/>
            <person name="Jakt M."/>
            <person name="Kanapin A."/>
            <person name="Katoh M."/>
            <person name="Kawasawa Y."/>
            <person name="Kelso J."/>
            <person name="Kitamura H."/>
            <person name="Kitano H."/>
            <person name="Kollias G."/>
            <person name="Krishnan S.P."/>
            <person name="Kruger A."/>
            <person name="Kummerfeld S.K."/>
            <person name="Kurochkin I.V."/>
            <person name="Lareau L.F."/>
            <person name="Lazarevic D."/>
            <person name="Lipovich L."/>
            <person name="Liu J."/>
            <person name="Liuni S."/>
            <person name="McWilliam S."/>
            <person name="Madan Babu M."/>
            <person name="Madera M."/>
            <person name="Marchionni L."/>
            <person name="Matsuda H."/>
            <person name="Matsuzawa S."/>
            <person name="Miki H."/>
            <person name="Mignone F."/>
            <person name="Miyake S."/>
            <person name="Morris K."/>
            <person name="Mottagui-Tabar S."/>
            <person name="Mulder N."/>
            <person name="Nakano N."/>
            <person name="Nakauchi H."/>
            <person name="Ng P."/>
            <person name="Nilsson R."/>
            <person name="Nishiguchi S."/>
            <person name="Nishikawa S."/>
            <person name="Nori F."/>
            <person name="Ohara O."/>
            <person name="Okazaki Y."/>
            <person name="Orlando V."/>
            <person name="Pang K.C."/>
            <person name="Pavan W.J."/>
            <person name="Pavesi G."/>
            <person name="Pesole G."/>
            <person name="Petrovsky N."/>
            <person name="Piazza S."/>
            <person name="Reed J."/>
            <person name="Reid J.F."/>
            <person name="Ring B.Z."/>
            <person name="Ringwald M."/>
            <person name="Rost B."/>
            <person name="Ruan Y."/>
            <person name="Salzberg S.L."/>
            <person name="Sandelin A."/>
            <person name="Schneider C."/>
            <person name="Schoenbach C."/>
            <person name="Sekiguchi K."/>
            <person name="Semple C.A."/>
            <person name="Seno S."/>
            <person name="Sessa L."/>
            <person name="Sheng Y."/>
            <person name="Shibata Y."/>
            <person name="Shimada H."/>
            <person name="Shimada K."/>
            <person name="Silva D."/>
            <person name="Sinclair B."/>
            <person name="Sperling S."/>
            <person name="Stupka E."/>
            <person name="Sugiura K."/>
            <person name="Sultana R."/>
            <person name="Takenaka Y."/>
            <person name="Taki K."/>
            <person name="Tammoja K."/>
            <person name="Tan S.L."/>
            <person name="Tang S."/>
            <person name="Taylor M.S."/>
            <person name="Tegner J."/>
            <person name="Teichmann S.A."/>
            <person name="Ueda H.R."/>
            <person name="van Nimwegen E."/>
            <person name="Verardo R."/>
            <person name="Wei C.L."/>
            <person name="Yagi K."/>
            <person name="Yamanishi H."/>
            <person name="Zabarovsky E."/>
            <person name="Zhu S."/>
            <person name="Zimmer A."/>
            <person name="Hide W."/>
            <person name="Bult C."/>
            <person name="Grimmond S.M."/>
            <person name="Teasdale R.D."/>
            <person name="Liu E.T."/>
            <person name="Brusic V."/>
            <person name="Quackenbush J."/>
            <person name="Wahlestedt C."/>
            <person name="Mattick J.S."/>
            <person name="Hume D.A."/>
            <person name="Kai C."/>
            <person name="Sasaki D."/>
            <person name="Tomaru Y."/>
            <person name="Fukuda S."/>
            <person name="Kanamori-Katayama M."/>
            <person name="Suzuki M."/>
            <person name="Aoki J."/>
            <person name="Arakawa T."/>
            <person name="Iida J."/>
            <person name="Imamura K."/>
            <person name="Itoh M."/>
            <person name="Kato T."/>
            <person name="Kawaji H."/>
            <person name="Kawagashira N."/>
            <person name="Kawashima T."/>
            <person name="Kojima M."/>
            <person name="Kondo S."/>
            <person name="Konno H."/>
            <person name="Nakano K."/>
            <person name="Ninomiya N."/>
            <person name="Nishio T."/>
            <person name="Okada M."/>
            <person name="Plessy C."/>
            <person name="Shibata K."/>
            <person name="Shiraki T."/>
            <person name="Suzuki S."/>
            <person name="Tagami M."/>
            <person name="Waki K."/>
            <person name="Watahiki A."/>
            <person name="Okamura-Oho Y."/>
            <person name="Suzuki H."/>
            <person name="Kawai J."/>
            <person name="Hayashizaki Y."/>
        </authorList>
    </citation>
    <scope>NUCLEOTIDE SEQUENCE [LARGE SCALE MRNA] (ISOFORM 2)</scope>
    <source>
        <strain>C57BL/6J</strain>
        <tissue>Cerebellum</tissue>
    </source>
</reference>
<reference key="4">
    <citation type="journal article" date="2009" name="PLoS Biol.">
        <title>Lineage-specific biology revealed by a finished genome assembly of the mouse.</title>
        <authorList>
            <person name="Church D.M."/>
            <person name="Goodstadt L."/>
            <person name="Hillier L.W."/>
            <person name="Zody M.C."/>
            <person name="Goldstein S."/>
            <person name="She X."/>
            <person name="Bult C.J."/>
            <person name="Agarwala R."/>
            <person name="Cherry J.L."/>
            <person name="DiCuccio M."/>
            <person name="Hlavina W."/>
            <person name="Kapustin Y."/>
            <person name="Meric P."/>
            <person name="Maglott D."/>
            <person name="Birtle Z."/>
            <person name="Marques A.C."/>
            <person name="Graves T."/>
            <person name="Zhou S."/>
            <person name="Teague B."/>
            <person name="Potamousis K."/>
            <person name="Churas C."/>
            <person name="Place M."/>
            <person name="Herschleb J."/>
            <person name="Runnheim R."/>
            <person name="Forrest D."/>
            <person name="Amos-Landgraf J."/>
            <person name="Schwartz D.C."/>
            <person name="Cheng Z."/>
            <person name="Lindblad-Toh K."/>
            <person name="Eichler E.E."/>
            <person name="Ponting C.P."/>
        </authorList>
    </citation>
    <scope>NUCLEOTIDE SEQUENCE [LARGE SCALE GENOMIC DNA]</scope>
    <source>
        <strain>C57BL/6J</strain>
    </source>
</reference>
<reference key="5">
    <citation type="journal article" date="2004" name="Genome Res.">
        <title>The status, quality, and expansion of the NIH full-length cDNA project: the Mammalian Gene Collection (MGC).</title>
        <authorList>
            <consortium name="The MGC Project Team"/>
        </authorList>
    </citation>
    <scope>NUCLEOTIDE SEQUENCE [LARGE SCALE MRNA] (ISOFORM 1)</scope>
</reference>
<reference key="6">
    <citation type="journal article" date="2003" name="J. Biol. Chem.">
        <title>Distinct Rab binding specificity of Rim1, Rim2, rabphilin, and Noc2. Identification of a critical determinant of Rab3A/Rab27A recognition by Rim2.</title>
        <authorList>
            <person name="Fukuda M."/>
        </authorList>
    </citation>
    <scope>CHARACTERIZATION</scope>
    <scope>INTERACTION WITH RAB3A; RAB3B; RAB3C; RAB3D AND RAB27A</scope>
</reference>
<reference key="7">
    <citation type="journal article" date="2007" name="Histochem. Cell Biol.">
        <title>Cellular expression of Noc2, a Rab effector protein, in endocrine and exocrine tissues in the mouse.</title>
        <authorList>
            <person name="Teramae H."/>
            <person name="Fujimoto W."/>
            <person name="Seino S."/>
            <person name="Iwanaga T."/>
        </authorList>
    </citation>
    <scope>SUBCELLULAR LOCATION</scope>
    <scope>TISSUE SPECIFICITY</scope>
</reference>
<reference key="8">
    <citation type="journal article" date="2010" name="Cell">
        <title>A tissue-specific atlas of mouse protein phosphorylation and expression.</title>
        <authorList>
            <person name="Huttlin E.L."/>
            <person name="Jedrychowski M.P."/>
            <person name="Elias J.E."/>
            <person name="Goswami T."/>
            <person name="Rad R."/>
            <person name="Beausoleil S.A."/>
            <person name="Villen J."/>
            <person name="Haas W."/>
            <person name="Sowa M.E."/>
            <person name="Gygi S.P."/>
        </authorList>
    </citation>
    <scope>PHOSPHORYLATION [LARGE SCALE ANALYSIS] AT SER-248</scope>
    <scope>IDENTIFICATION BY MASS SPECTROMETRY [LARGE SCALE ANALYSIS]</scope>
    <source>
        <tissue>Pancreas</tissue>
    </source>
</reference>